<proteinExistence type="inferred from homology"/>
<organism>
    <name type="scientific">Borrelia garinii subsp. bavariensis (strain ATCC BAA-2496 / DSM 23469 / PBi)</name>
    <name type="common">Borreliella bavariensis</name>
    <dbReference type="NCBI Taxonomy" id="290434"/>
    <lineage>
        <taxon>Bacteria</taxon>
        <taxon>Pseudomonadati</taxon>
        <taxon>Spirochaetota</taxon>
        <taxon>Spirochaetia</taxon>
        <taxon>Spirochaetales</taxon>
        <taxon>Borreliaceae</taxon>
        <taxon>Borreliella</taxon>
    </lineage>
</organism>
<evidence type="ECO:0000255" key="1">
    <source>
        <dbReference type="HAMAP-Rule" id="MF_00270"/>
    </source>
</evidence>
<evidence type="ECO:0000305" key="2"/>
<accession>Q662P9</accession>
<comment type="function">
    <text evidence="1">Binds as a heterodimer with protein bS6 to the central domain of the 16S rRNA, where it helps stabilize the platform of the 30S subunit.</text>
</comment>
<comment type="subunit">
    <text evidence="1">Part of the 30S ribosomal subunit. Forms a tight heterodimer with protein bS6.</text>
</comment>
<comment type="similarity">
    <text evidence="1">Belongs to the bacterial ribosomal protein bS18 family.</text>
</comment>
<keyword id="KW-0687">Ribonucleoprotein</keyword>
<keyword id="KW-0689">Ribosomal protein</keyword>
<keyword id="KW-0694">RNA-binding</keyword>
<keyword id="KW-0699">rRNA-binding</keyword>
<name>RS18_BORGP</name>
<protein>
    <recommendedName>
        <fullName evidence="1">Small ribosomal subunit protein bS18</fullName>
    </recommendedName>
    <alternativeName>
        <fullName evidence="2">30S ribosomal protein S18</fullName>
    </alternativeName>
</protein>
<gene>
    <name evidence="1" type="primary">rpsR</name>
    <name type="ordered locus">BG0114</name>
</gene>
<sequence length="96" mass="11598">MYKDRDVNQRDSRFENQQDGFKKNSNFRFFKRKSCKFCDSGKHPDYKDFDFLKKFITEQGKILPKRITGTSAKHQRRLALEVKRARYMALLPFVKK</sequence>
<reference key="1">
    <citation type="journal article" date="2004" name="Nucleic Acids Res.">
        <title>Comparative analysis of the Borrelia garinii genome.</title>
        <authorList>
            <person name="Gloeckner G."/>
            <person name="Lehmann R."/>
            <person name="Romualdi A."/>
            <person name="Pradella S."/>
            <person name="Schulte-Spechtel U."/>
            <person name="Schilhabel M."/>
            <person name="Wilske B."/>
            <person name="Suehnel J."/>
            <person name="Platzer M."/>
        </authorList>
    </citation>
    <scope>NUCLEOTIDE SEQUENCE [LARGE SCALE GENOMIC DNA]</scope>
    <source>
        <strain>ATCC BAA-2496 / DSM 23469 / PBi</strain>
    </source>
</reference>
<dbReference type="EMBL" id="CP000013">
    <property type="protein sequence ID" value="AAU06972.1"/>
    <property type="molecule type" value="Genomic_DNA"/>
</dbReference>
<dbReference type="RefSeq" id="WP_011193465.1">
    <property type="nucleotide sequence ID" value="NZ_CP028872.1"/>
</dbReference>
<dbReference type="SMR" id="Q662P9"/>
<dbReference type="GeneID" id="45160909"/>
<dbReference type="KEGG" id="bga:BG0114"/>
<dbReference type="eggNOG" id="COG0238">
    <property type="taxonomic scope" value="Bacteria"/>
</dbReference>
<dbReference type="HOGENOM" id="CLU_148710_0_2_12"/>
<dbReference type="OrthoDB" id="9812008at2"/>
<dbReference type="Proteomes" id="UP000002276">
    <property type="component" value="Chromosome"/>
</dbReference>
<dbReference type="GO" id="GO:0022627">
    <property type="term" value="C:cytosolic small ribosomal subunit"/>
    <property type="evidence" value="ECO:0007669"/>
    <property type="project" value="TreeGrafter"/>
</dbReference>
<dbReference type="GO" id="GO:0070181">
    <property type="term" value="F:small ribosomal subunit rRNA binding"/>
    <property type="evidence" value="ECO:0007669"/>
    <property type="project" value="TreeGrafter"/>
</dbReference>
<dbReference type="GO" id="GO:0003735">
    <property type="term" value="F:structural constituent of ribosome"/>
    <property type="evidence" value="ECO:0007669"/>
    <property type="project" value="InterPro"/>
</dbReference>
<dbReference type="GO" id="GO:0006412">
    <property type="term" value="P:translation"/>
    <property type="evidence" value="ECO:0007669"/>
    <property type="project" value="UniProtKB-UniRule"/>
</dbReference>
<dbReference type="Gene3D" id="4.10.640.10">
    <property type="entry name" value="Ribosomal protein S18"/>
    <property type="match status" value="1"/>
</dbReference>
<dbReference type="HAMAP" id="MF_00270">
    <property type="entry name" value="Ribosomal_bS18"/>
    <property type="match status" value="1"/>
</dbReference>
<dbReference type="InterPro" id="IPR001648">
    <property type="entry name" value="Ribosomal_bS18"/>
</dbReference>
<dbReference type="InterPro" id="IPR018275">
    <property type="entry name" value="Ribosomal_bS18_CS"/>
</dbReference>
<dbReference type="InterPro" id="IPR036870">
    <property type="entry name" value="Ribosomal_bS18_sf"/>
</dbReference>
<dbReference type="NCBIfam" id="TIGR00165">
    <property type="entry name" value="S18"/>
    <property type="match status" value="1"/>
</dbReference>
<dbReference type="PANTHER" id="PTHR13479">
    <property type="entry name" value="30S RIBOSOMAL PROTEIN S18"/>
    <property type="match status" value="1"/>
</dbReference>
<dbReference type="PANTHER" id="PTHR13479:SF40">
    <property type="entry name" value="SMALL RIBOSOMAL SUBUNIT PROTEIN BS18M"/>
    <property type="match status" value="1"/>
</dbReference>
<dbReference type="Pfam" id="PF01084">
    <property type="entry name" value="Ribosomal_S18"/>
    <property type="match status" value="1"/>
</dbReference>
<dbReference type="PRINTS" id="PR00974">
    <property type="entry name" value="RIBOSOMALS18"/>
</dbReference>
<dbReference type="SUPFAM" id="SSF46911">
    <property type="entry name" value="Ribosomal protein S18"/>
    <property type="match status" value="1"/>
</dbReference>
<dbReference type="PROSITE" id="PS00057">
    <property type="entry name" value="RIBOSOMAL_S18"/>
    <property type="match status" value="1"/>
</dbReference>
<feature type="chain" id="PRO_0000111124" description="Small ribosomal subunit protein bS18">
    <location>
        <begin position="1"/>
        <end position="96"/>
    </location>
</feature>